<accession>Q0II80</accession>
<sequence length="225" mass="25007">MLGLDACELGAQLLELLRLALCARVLLTDKEGGQLPPEEALDEAVPEYRAPGKKSLLEIQQLDPDDESLVKYKRALLGPVLPAVDPSLPNVQVTRLTLISEQAPGPIVMDLTGELAALKNQVFVLKEGVDYKVKITFKVNKEIVSGLKCLHHTYRHGLRVDKAVYMVGSYGPSAQEYEFVTPVEEAPRGALVRGAYVVTSFFTDDDRTAHLSWEWGLYVCQDWER</sequence>
<keyword id="KW-0963">Cytoplasm</keyword>
<keyword id="KW-0343">GTPase activation</keyword>
<keyword id="KW-1185">Reference proteome</keyword>
<organism>
    <name type="scientific">Bos taurus</name>
    <name type="common">Bovine</name>
    <dbReference type="NCBI Taxonomy" id="9913"/>
    <lineage>
        <taxon>Eukaryota</taxon>
        <taxon>Metazoa</taxon>
        <taxon>Chordata</taxon>
        <taxon>Craniata</taxon>
        <taxon>Vertebrata</taxon>
        <taxon>Euteleostomi</taxon>
        <taxon>Mammalia</taxon>
        <taxon>Eutheria</taxon>
        <taxon>Laurasiatheria</taxon>
        <taxon>Artiodactyla</taxon>
        <taxon>Ruminantia</taxon>
        <taxon>Pecora</taxon>
        <taxon>Bovidae</taxon>
        <taxon>Bovinae</taxon>
        <taxon>Bos</taxon>
    </lineage>
</organism>
<gene>
    <name type="primary">ARHGDIG</name>
</gene>
<proteinExistence type="evidence at transcript level"/>
<comment type="function">
    <text evidence="1">Inhibits GDP/GTP exchange reaction of RhoB. Interacts specifically with the GDP- and GTP-bound forms of post-translationally processed Rhob and Rhog proteins, both of which show a growth-regulated expression in mammalian cells. Stimulates the release of the GDP-bound but not the GTP-bound RhoB protein. Also inhibits the GDP/GTP exchange of RhoB but shows less ability to inhibit the dissociation of prebound GTP (By similarity).</text>
</comment>
<comment type="subcellular location">
    <subcellularLocation>
        <location evidence="1">Cytoplasm</location>
    </subcellularLocation>
</comment>
<comment type="similarity">
    <text evidence="2">Belongs to the Rho GDI family.</text>
</comment>
<evidence type="ECO:0000250" key="1"/>
<evidence type="ECO:0000305" key="2"/>
<protein>
    <recommendedName>
        <fullName>Rho GDP-dissociation inhibitor 3</fullName>
        <shortName>Rho GDI 3</shortName>
    </recommendedName>
    <alternativeName>
        <fullName>Rho-GDI gamma</fullName>
    </alternativeName>
</protein>
<feature type="chain" id="PRO_0000318592" description="Rho GDP-dissociation inhibitor 3">
    <location>
        <begin position="1"/>
        <end position="225"/>
    </location>
</feature>
<reference key="1">
    <citation type="submission" date="2006-08" db="EMBL/GenBank/DDBJ databases">
        <authorList>
            <consortium name="NIH - Mammalian Gene Collection (MGC) project"/>
        </authorList>
    </citation>
    <scope>NUCLEOTIDE SEQUENCE [LARGE SCALE MRNA]</scope>
    <source>
        <strain>Hereford</strain>
        <tissue>Hypothalamus</tissue>
    </source>
</reference>
<dbReference type="EMBL" id="BC122764">
    <property type="protein sequence ID" value="AAI22765.1"/>
    <property type="molecule type" value="mRNA"/>
</dbReference>
<dbReference type="RefSeq" id="NP_001069754.1">
    <property type="nucleotide sequence ID" value="NM_001076286.1"/>
</dbReference>
<dbReference type="SMR" id="Q0II80"/>
<dbReference type="FunCoup" id="Q0II80">
    <property type="interactions" value="818"/>
</dbReference>
<dbReference type="PaxDb" id="9913-ENSBTAP00000039941"/>
<dbReference type="GeneID" id="613745"/>
<dbReference type="KEGG" id="bta:613745"/>
<dbReference type="CTD" id="398"/>
<dbReference type="VEuPathDB" id="HostDB:ENSBTAG00000027854"/>
<dbReference type="eggNOG" id="KOG3205">
    <property type="taxonomic scope" value="Eukaryota"/>
</dbReference>
<dbReference type="InParanoid" id="Q0II80"/>
<dbReference type="OrthoDB" id="1683373at2759"/>
<dbReference type="Reactome" id="R-BTA-9013148">
    <property type="pathway name" value="CDC42 GTPase cycle"/>
</dbReference>
<dbReference type="Reactome" id="R-BTA-9013407">
    <property type="pathway name" value="RHOH GTPase cycle"/>
</dbReference>
<dbReference type="Reactome" id="R-BTA-9013408">
    <property type="pathway name" value="RHOG GTPase cycle"/>
</dbReference>
<dbReference type="Proteomes" id="UP000009136">
    <property type="component" value="Chromosome 25"/>
</dbReference>
<dbReference type="Bgee" id="ENSBTAG00000027854">
    <property type="expression patterns" value="Expressed in temporal cortex and 75 other cell types or tissues"/>
</dbReference>
<dbReference type="GO" id="GO:0005829">
    <property type="term" value="C:cytosol"/>
    <property type="evidence" value="ECO:0000318"/>
    <property type="project" value="GO_Central"/>
</dbReference>
<dbReference type="GO" id="GO:0016020">
    <property type="term" value="C:membrane"/>
    <property type="evidence" value="ECO:0000318"/>
    <property type="project" value="GO_Central"/>
</dbReference>
<dbReference type="GO" id="GO:0005096">
    <property type="term" value="F:GTPase activator activity"/>
    <property type="evidence" value="ECO:0007669"/>
    <property type="project" value="UniProtKB-KW"/>
</dbReference>
<dbReference type="GO" id="GO:0005094">
    <property type="term" value="F:Rho GDP-dissociation inhibitor activity"/>
    <property type="evidence" value="ECO:0000318"/>
    <property type="project" value="GO_Central"/>
</dbReference>
<dbReference type="GO" id="GO:0007266">
    <property type="term" value="P:Rho protein signal transduction"/>
    <property type="evidence" value="ECO:0000318"/>
    <property type="project" value="GO_Central"/>
</dbReference>
<dbReference type="FunFam" id="2.70.50.30:FF:000001">
    <property type="entry name" value="Rho GDP-dissociation inhibitor 1"/>
    <property type="match status" value="1"/>
</dbReference>
<dbReference type="Gene3D" id="2.70.50.30">
    <property type="entry name" value="Coagulation Factor XIII, subunit A, domain 1"/>
    <property type="match status" value="1"/>
</dbReference>
<dbReference type="InterPro" id="IPR014756">
    <property type="entry name" value="Ig_E-set"/>
</dbReference>
<dbReference type="InterPro" id="IPR000406">
    <property type="entry name" value="Rho_GDI"/>
</dbReference>
<dbReference type="InterPro" id="IPR024792">
    <property type="entry name" value="RhoGDI_dom_sf"/>
</dbReference>
<dbReference type="PANTHER" id="PTHR10980">
    <property type="entry name" value="RHO GDP-DISSOCIATION INHIBITOR"/>
    <property type="match status" value="1"/>
</dbReference>
<dbReference type="PANTHER" id="PTHR10980:SF8">
    <property type="entry name" value="RHO GDP-DISSOCIATION INHIBITOR 3"/>
    <property type="match status" value="1"/>
</dbReference>
<dbReference type="Pfam" id="PF02115">
    <property type="entry name" value="Rho_GDI"/>
    <property type="match status" value="1"/>
</dbReference>
<dbReference type="PRINTS" id="PR00492">
    <property type="entry name" value="RHOGDI"/>
</dbReference>
<dbReference type="SUPFAM" id="SSF81296">
    <property type="entry name" value="E set domains"/>
    <property type="match status" value="1"/>
</dbReference>
<name>GDIR3_BOVIN</name>